<keyword id="KW-0342">GTP-binding</keyword>
<keyword id="KW-0547">Nucleotide-binding</keyword>
<keyword id="KW-0677">Repeat</keyword>
<keyword id="KW-0690">Ribosome biogenesis</keyword>
<organism>
    <name type="scientific">Streptococcus pyogenes serotype M6 (strain ATCC BAA-946 / MGAS10394)</name>
    <dbReference type="NCBI Taxonomy" id="286636"/>
    <lineage>
        <taxon>Bacteria</taxon>
        <taxon>Bacillati</taxon>
        <taxon>Bacillota</taxon>
        <taxon>Bacilli</taxon>
        <taxon>Lactobacillales</taxon>
        <taxon>Streptococcaceae</taxon>
        <taxon>Streptococcus</taxon>
    </lineage>
</organism>
<protein>
    <recommendedName>
        <fullName evidence="1">GTPase Der</fullName>
    </recommendedName>
    <alternativeName>
        <fullName evidence="1">GTP-binding protein EngA</fullName>
    </alternativeName>
</protein>
<gene>
    <name evidence="1" type="primary">der</name>
    <name type="synonym">engA</name>
    <name type="ordered locus">M6_Spy0315</name>
</gene>
<sequence>MVLPTVAIVGRPNVGKSTLFNRIAGERISIVEDVEGVTRDRIYATGEWLNRQFSLIDTGGIDDVDAPFMEQIKHQAQIAMEEADVIVFVVSGKEGVTDADEYVSKILYRTNTPVILAVNKVDNPEMRNDIYDFYSLGLGDPYPVSSVHGIGTGDVLDAIVENLPVEEAEENDDIIRFSLIGRPNVGKSSLINAILGEDRVIASPVAGTTRDAIDTHFTDADGQEFTMIDTAGMRKSGKIYENTEKYSVMRAMRAIDRSDVVLMVINAEEGIREYDKRIAGFAHEAGKGMIIVVNKWDTIDKDNHTVAKWEADIRDQFQFLTYAPIIFVSALTKQRLNKLPDLIKRISESQNKRIPSAVLNDVIMDAIAINPTPTDKGKRLKIFYATQVSVKPPTFVVFVNEEELMHFSYLRFLENQIRAAFTFEGTPIHLIARKRK</sequence>
<accession>Q5XDR3</accession>
<feature type="chain" id="PRO_0000179059" description="GTPase Der">
    <location>
        <begin position="1"/>
        <end position="436"/>
    </location>
</feature>
<feature type="domain" description="EngA-type G 1">
    <location>
        <begin position="4"/>
        <end position="167"/>
    </location>
</feature>
<feature type="domain" description="EngA-type G 2">
    <location>
        <begin position="175"/>
        <end position="351"/>
    </location>
</feature>
<feature type="domain" description="KH-like" evidence="1">
    <location>
        <begin position="352"/>
        <end position="436"/>
    </location>
</feature>
<feature type="binding site" evidence="1">
    <location>
        <begin position="10"/>
        <end position="17"/>
    </location>
    <ligand>
        <name>GTP</name>
        <dbReference type="ChEBI" id="CHEBI:37565"/>
        <label>1</label>
    </ligand>
</feature>
<feature type="binding site" evidence="1">
    <location>
        <begin position="57"/>
        <end position="61"/>
    </location>
    <ligand>
        <name>GTP</name>
        <dbReference type="ChEBI" id="CHEBI:37565"/>
        <label>1</label>
    </ligand>
</feature>
<feature type="binding site" evidence="1">
    <location>
        <begin position="119"/>
        <end position="122"/>
    </location>
    <ligand>
        <name>GTP</name>
        <dbReference type="ChEBI" id="CHEBI:37565"/>
        <label>1</label>
    </ligand>
</feature>
<feature type="binding site" evidence="1">
    <location>
        <begin position="181"/>
        <end position="188"/>
    </location>
    <ligand>
        <name>GTP</name>
        <dbReference type="ChEBI" id="CHEBI:37565"/>
        <label>2</label>
    </ligand>
</feature>
<feature type="binding site" evidence="1">
    <location>
        <begin position="229"/>
        <end position="233"/>
    </location>
    <ligand>
        <name>GTP</name>
        <dbReference type="ChEBI" id="CHEBI:37565"/>
        <label>2</label>
    </ligand>
</feature>
<feature type="binding site" evidence="1">
    <location>
        <begin position="294"/>
        <end position="297"/>
    </location>
    <ligand>
        <name>GTP</name>
        <dbReference type="ChEBI" id="CHEBI:37565"/>
        <label>2</label>
    </ligand>
</feature>
<reference key="1">
    <citation type="journal article" date="2004" name="J. Infect. Dis.">
        <title>Progress toward characterization of the group A Streptococcus metagenome: complete genome sequence of a macrolide-resistant serotype M6 strain.</title>
        <authorList>
            <person name="Banks D.J."/>
            <person name="Porcella S.F."/>
            <person name="Barbian K.D."/>
            <person name="Beres S.B."/>
            <person name="Philips L.E."/>
            <person name="Voyich J.M."/>
            <person name="DeLeo F.R."/>
            <person name="Martin J.M."/>
            <person name="Somerville G.A."/>
            <person name="Musser J.M."/>
        </authorList>
    </citation>
    <scope>NUCLEOTIDE SEQUENCE [LARGE SCALE GENOMIC DNA]</scope>
    <source>
        <strain>ATCC BAA-946 / MGAS10394</strain>
    </source>
</reference>
<comment type="function">
    <text evidence="1">GTPase that plays an essential role in the late steps of ribosome biogenesis.</text>
</comment>
<comment type="subunit">
    <text evidence="1">Associates with the 50S ribosomal subunit.</text>
</comment>
<comment type="similarity">
    <text evidence="1">Belongs to the TRAFAC class TrmE-Era-EngA-EngB-Septin-like GTPase superfamily. EngA (Der) GTPase family.</text>
</comment>
<name>DER_STRP6</name>
<dbReference type="EMBL" id="CP000003">
    <property type="protein sequence ID" value="AAT86450.1"/>
    <property type="molecule type" value="Genomic_DNA"/>
</dbReference>
<dbReference type="RefSeq" id="WP_002991013.1">
    <property type="nucleotide sequence ID" value="NC_006086.1"/>
</dbReference>
<dbReference type="SMR" id="Q5XDR3"/>
<dbReference type="GeneID" id="69901378"/>
<dbReference type="KEGG" id="spa:M6_Spy0315"/>
<dbReference type="HOGENOM" id="CLU_016077_6_2_9"/>
<dbReference type="Proteomes" id="UP000001167">
    <property type="component" value="Chromosome"/>
</dbReference>
<dbReference type="GO" id="GO:0005525">
    <property type="term" value="F:GTP binding"/>
    <property type="evidence" value="ECO:0007669"/>
    <property type="project" value="UniProtKB-UniRule"/>
</dbReference>
<dbReference type="GO" id="GO:0043022">
    <property type="term" value="F:ribosome binding"/>
    <property type="evidence" value="ECO:0007669"/>
    <property type="project" value="TreeGrafter"/>
</dbReference>
<dbReference type="GO" id="GO:0042254">
    <property type="term" value="P:ribosome biogenesis"/>
    <property type="evidence" value="ECO:0007669"/>
    <property type="project" value="UniProtKB-KW"/>
</dbReference>
<dbReference type="CDD" id="cd01894">
    <property type="entry name" value="EngA1"/>
    <property type="match status" value="1"/>
</dbReference>
<dbReference type="CDD" id="cd01895">
    <property type="entry name" value="EngA2"/>
    <property type="match status" value="1"/>
</dbReference>
<dbReference type="FunFam" id="3.30.300.20:FF:000004">
    <property type="entry name" value="GTPase Der"/>
    <property type="match status" value="1"/>
</dbReference>
<dbReference type="FunFam" id="3.40.50.300:FF:000040">
    <property type="entry name" value="GTPase Der"/>
    <property type="match status" value="1"/>
</dbReference>
<dbReference type="FunFam" id="3.40.50.300:FF:000057">
    <property type="entry name" value="GTPase Der"/>
    <property type="match status" value="1"/>
</dbReference>
<dbReference type="Gene3D" id="3.30.300.20">
    <property type="match status" value="1"/>
</dbReference>
<dbReference type="Gene3D" id="3.40.50.300">
    <property type="entry name" value="P-loop containing nucleotide triphosphate hydrolases"/>
    <property type="match status" value="2"/>
</dbReference>
<dbReference type="HAMAP" id="MF_00195">
    <property type="entry name" value="GTPase_Der"/>
    <property type="match status" value="1"/>
</dbReference>
<dbReference type="InterPro" id="IPR031166">
    <property type="entry name" value="G_ENGA"/>
</dbReference>
<dbReference type="InterPro" id="IPR006073">
    <property type="entry name" value="GTP-bd"/>
</dbReference>
<dbReference type="InterPro" id="IPR016484">
    <property type="entry name" value="GTPase_Der"/>
</dbReference>
<dbReference type="InterPro" id="IPR032859">
    <property type="entry name" value="KH_dom-like"/>
</dbReference>
<dbReference type="InterPro" id="IPR015946">
    <property type="entry name" value="KH_dom-like_a/b"/>
</dbReference>
<dbReference type="InterPro" id="IPR027417">
    <property type="entry name" value="P-loop_NTPase"/>
</dbReference>
<dbReference type="InterPro" id="IPR005225">
    <property type="entry name" value="Small_GTP-bd"/>
</dbReference>
<dbReference type="NCBIfam" id="TIGR03594">
    <property type="entry name" value="GTPase_EngA"/>
    <property type="match status" value="1"/>
</dbReference>
<dbReference type="NCBIfam" id="TIGR00231">
    <property type="entry name" value="small_GTP"/>
    <property type="match status" value="2"/>
</dbReference>
<dbReference type="PANTHER" id="PTHR43834">
    <property type="entry name" value="GTPASE DER"/>
    <property type="match status" value="1"/>
</dbReference>
<dbReference type="PANTHER" id="PTHR43834:SF6">
    <property type="entry name" value="GTPASE DER"/>
    <property type="match status" value="1"/>
</dbReference>
<dbReference type="Pfam" id="PF14714">
    <property type="entry name" value="KH_dom-like"/>
    <property type="match status" value="1"/>
</dbReference>
<dbReference type="Pfam" id="PF01926">
    <property type="entry name" value="MMR_HSR1"/>
    <property type="match status" value="2"/>
</dbReference>
<dbReference type="PIRSF" id="PIRSF006485">
    <property type="entry name" value="GTP-binding_EngA"/>
    <property type="match status" value="1"/>
</dbReference>
<dbReference type="PRINTS" id="PR00326">
    <property type="entry name" value="GTP1OBG"/>
</dbReference>
<dbReference type="SUPFAM" id="SSF52540">
    <property type="entry name" value="P-loop containing nucleoside triphosphate hydrolases"/>
    <property type="match status" value="2"/>
</dbReference>
<dbReference type="PROSITE" id="PS51712">
    <property type="entry name" value="G_ENGA"/>
    <property type="match status" value="2"/>
</dbReference>
<evidence type="ECO:0000255" key="1">
    <source>
        <dbReference type="HAMAP-Rule" id="MF_00195"/>
    </source>
</evidence>
<proteinExistence type="inferred from homology"/>